<evidence type="ECO:0000255" key="1">
    <source>
        <dbReference type="HAMAP-Rule" id="MF_00373"/>
    </source>
</evidence>
<evidence type="ECO:0000305" key="2"/>
<name>RL28_NOSS1</name>
<accession>Q8YTT3</accession>
<comment type="similarity">
    <text evidence="1">Belongs to the bacterial ribosomal protein bL28 family.</text>
</comment>
<feature type="chain" id="PRO_0000178418" description="Large ribosomal subunit protein bL28">
    <location>
        <begin position="1"/>
        <end position="78"/>
    </location>
</feature>
<gene>
    <name evidence="1" type="primary">rpmB</name>
    <name evidence="1" type="synonym">rpl28</name>
    <name type="ordered locus">asl2630</name>
</gene>
<sequence>MSRRCDLTGKKANNAFAVSHSHRRTKRLQQVNLQNKRVWWPSGNRWVKLKLSTKAIKTLEVKGLEAMAKEAGINLNHY</sequence>
<proteinExistence type="inferred from homology"/>
<keyword id="KW-1185">Reference proteome</keyword>
<keyword id="KW-0687">Ribonucleoprotein</keyword>
<keyword id="KW-0689">Ribosomal protein</keyword>
<dbReference type="EMBL" id="BA000019">
    <property type="protein sequence ID" value="BAB74329.1"/>
    <property type="molecule type" value="Genomic_DNA"/>
</dbReference>
<dbReference type="PIR" id="AG2134">
    <property type="entry name" value="AG2134"/>
</dbReference>
<dbReference type="RefSeq" id="WP_010996786.1">
    <property type="nucleotide sequence ID" value="NZ_RSCN01000002.1"/>
</dbReference>
<dbReference type="SMR" id="Q8YTT3"/>
<dbReference type="STRING" id="103690.gene:10494661"/>
<dbReference type="KEGG" id="ana:asl2630"/>
<dbReference type="eggNOG" id="COG0227">
    <property type="taxonomic scope" value="Bacteria"/>
</dbReference>
<dbReference type="OrthoDB" id="9805609at2"/>
<dbReference type="Proteomes" id="UP000002483">
    <property type="component" value="Chromosome"/>
</dbReference>
<dbReference type="GO" id="GO:1990904">
    <property type="term" value="C:ribonucleoprotein complex"/>
    <property type="evidence" value="ECO:0007669"/>
    <property type="project" value="UniProtKB-KW"/>
</dbReference>
<dbReference type="GO" id="GO:0005840">
    <property type="term" value="C:ribosome"/>
    <property type="evidence" value="ECO:0007669"/>
    <property type="project" value="UniProtKB-KW"/>
</dbReference>
<dbReference type="GO" id="GO:0003735">
    <property type="term" value="F:structural constituent of ribosome"/>
    <property type="evidence" value="ECO:0007669"/>
    <property type="project" value="InterPro"/>
</dbReference>
<dbReference type="GO" id="GO:0006412">
    <property type="term" value="P:translation"/>
    <property type="evidence" value="ECO:0007669"/>
    <property type="project" value="UniProtKB-UniRule"/>
</dbReference>
<dbReference type="Gene3D" id="2.30.170.40">
    <property type="entry name" value="Ribosomal protein L28/L24"/>
    <property type="match status" value="1"/>
</dbReference>
<dbReference type="HAMAP" id="MF_00373">
    <property type="entry name" value="Ribosomal_bL28"/>
    <property type="match status" value="1"/>
</dbReference>
<dbReference type="InterPro" id="IPR026569">
    <property type="entry name" value="Ribosomal_bL28"/>
</dbReference>
<dbReference type="InterPro" id="IPR034704">
    <property type="entry name" value="Ribosomal_bL28/bL31-like_sf"/>
</dbReference>
<dbReference type="InterPro" id="IPR001383">
    <property type="entry name" value="Ribosomal_bL28_bact-type"/>
</dbReference>
<dbReference type="InterPro" id="IPR037147">
    <property type="entry name" value="Ribosomal_bL28_sf"/>
</dbReference>
<dbReference type="NCBIfam" id="TIGR00009">
    <property type="entry name" value="L28"/>
    <property type="match status" value="1"/>
</dbReference>
<dbReference type="PANTHER" id="PTHR13528">
    <property type="entry name" value="39S RIBOSOMAL PROTEIN L28, MITOCHONDRIAL"/>
    <property type="match status" value="1"/>
</dbReference>
<dbReference type="PANTHER" id="PTHR13528:SF2">
    <property type="entry name" value="LARGE RIBOSOMAL SUBUNIT PROTEIN BL28M"/>
    <property type="match status" value="1"/>
</dbReference>
<dbReference type="Pfam" id="PF00830">
    <property type="entry name" value="Ribosomal_L28"/>
    <property type="match status" value="1"/>
</dbReference>
<dbReference type="SUPFAM" id="SSF143800">
    <property type="entry name" value="L28p-like"/>
    <property type="match status" value="1"/>
</dbReference>
<protein>
    <recommendedName>
        <fullName evidence="1">Large ribosomal subunit protein bL28</fullName>
    </recommendedName>
    <alternativeName>
        <fullName evidence="2">50S ribosomal protein L28</fullName>
    </alternativeName>
</protein>
<organism>
    <name type="scientific">Nostoc sp. (strain PCC 7120 / SAG 25.82 / UTEX 2576)</name>
    <dbReference type="NCBI Taxonomy" id="103690"/>
    <lineage>
        <taxon>Bacteria</taxon>
        <taxon>Bacillati</taxon>
        <taxon>Cyanobacteriota</taxon>
        <taxon>Cyanophyceae</taxon>
        <taxon>Nostocales</taxon>
        <taxon>Nostocaceae</taxon>
        <taxon>Nostoc</taxon>
    </lineage>
</organism>
<reference key="1">
    <citation type="journal article" date="2001" name="DNA Res.">
        <title>Complete genomic sequence of the filamentous nitrogen-fixing cyanobacterium Anabaena sp. strain PCC 7120.</title>
        <authorList>
            <person name="Kaneko T."/>
            <person name="Nakamura Y."/>
            <person name="Wolk C.P."/>
            <person name="Kuritz T."/>
            <person name="Sasamoto S."/>
            <person name="Watanabe A."/>
            <person name="Iriguchi M."/>
            <person name="Ishikawa A."/>
            <person name="Kawashima K."/>
            <person name="Kimura T."/>
            <person name="Kishida Y."/>
            <person name="Kohara M."/>
            <person name="Matsumoto M."/>
            <person name="Matsuno A."/>
            <person name="Muraki A."/>
            <person name="Nakazaki N."/>
            <person name="Shimpo S."/>
            <person name="Sugimoto M."/>
            <person name="Takazawa M."/>
            <person name="Yamada M."/>
            <person name="Yasuda M."/>
            <person name="Tabata S."/>
        </authorList>
    </citation>
    <scope>NUCLEOTIDE SEQUENCE [LARGE SCALE GENOMIC DNA]</scope>
    <source>
        <strain>PCC 7120 / SAG 25.82 / UTEX 2576</strain>
    </source>
</reference>